<feature type="chain" id="PRO_0000270254" description="Methionine import ATP-binding protein MetN">
    <location>
        <begin position="1"/>
        <end position="362"/>
    </location>
</feature>
<feature type="domain" description="ABC transporter" evidence="1">
    <location>
        <begin position="2"/>
        <end position="241"/>
    </location>
</feature>
<feature type="binding site" evidence="1">
    <location>
        <begin position="38"/>
        <end position="45"/>
    </location>
    <ligand>
        <name>ATP</name>
        <dbReference type="ChEBI" id="CHEBI:30616"/>
    </ligand>
</feature>
<accession>Q7W4E1</accession>
<reference key="1">
    <citation type="journal article" date="2003" name="Nat. Genet.">
        <title>Comparative analysis of the genome sequences of Bordetella pertussis, Bordetella parapertussis and Bordetella bronchiseptica.</title>
        <authorList>
            <person name="Parkhill J."/>
            <person name="Sebaihia M."/>
            <person name="Preston A."/>
            <person name="Murphy L.D."/>
            <person name="Thomson N.R."/>
            <person name="Harris D.E."/>
            <person name="Holden M.T.G."/>
            <person name="Churcher C.M."/>
            <person name="Bentley S.D."/>
            <person name="Mungall K.L."/>
            <person name="Cerdeno-Tarraga A.-M."/>
            <person name="Temple L."/>
            <person name="James K.D."/>
            <person name="Harris B."/>
            <person name="Quail M.A."/>
            <person name="Achtman M."/>
            <person name="Atkin R."/>
            <person name="Baker S."/>
            <person name="Basham D."/>
            <person name="Bason N."/>
            <person name="Cherevach I."/>
            <person name="Chillingworth T."/>
            <person name="Collins M."/>
            <person name="Cronin A."/>
            <person name="Davis P."/>
            <person name="Doggett J."/>
            <person name="Feltwell T."/>
            <person name="Goble A."/>
            <person name="Hamlin N."/>
            <person name="Hauser H."/>
            <person name="Holroyd S."/>
            <person name="Jagels K."/>
            <person name="Leather S."/>
            <person name="Moule S."/>
            <person name="Norberczak H."/>
            <person name="O'Neil S."/>
            <person name="Ormond D."/>
            <person name="Price C."/>
            <person name="Rabbinowitsch E."/>
            <person name="Rutter S."/>
            <person name="Sanders M."/>
            <person name="Saunders D."/>
            <person name="Seeger K."/>
            <person name="Sharp S."/>
            <person name="Simmonds M."/>
            <person name="Skelton J."/>
            <person name="Squares R."/>
            <person name="Squares S."/>
            <person name="Stevens K."/>
            <person name="Unwin L."/>
            <person name="Whitehead S."/>
            <person name="Barrell B.G."/>
            <person name="Maskell D.J."/>
        </authorList>
    </citation>
    <scope>NUCLEOTIDE SEQUENCE [LARGE SCALE GENOMIC DNA]</scope>
    <source>
        <strain>12822 / ATCC BAA-587 / NCTC 13253</strain>
    </source>
</reference>
<comment type="function">
    <text evidence="1">Part of the ABC transporter complex MetNIQ involved in methionine import. Responsible for energy coupling to the transport system.</text>
</comment>
<comment type="catalytic activity">
    <reaction evidence="1">
        <text>L-methionine(out) + ATP + H2O = L-methionine(in) + ADP + phosphate + H(+)</text>
        <dbReference type="Rhea" id="RHEA:29779"/>
        <dbReference type="ChEBI" id="CHEBI:15377"/>
        <dbReference type="ChEBI" id="CHEBI:15378"/>
        <dbReference type="ChEBI" id="CHEBI:30616"/>
        <dbReference type="ChEBI" id="CHEBI:43474"/>
        <dbReference type="ChEBI" id="CHEBI:57844"/>
        <dbReference type="ChEBI" id="CHEBI:456216"/>
        <dbReference type="EC" id="7.4.2.11"/>
    </reaction>
</comment>
<comment type="catalytic activity">
    <reaction evidence="1">
        <text>D-methionine(out) + ATP + H2O = D-methionine(in) + ADP + phosphate + H(+)</text>
        <dbReference type="Rhea" id="RHEA:29767"/>
        <dbReference type="ChEBI" id="CHEBI:15377"/>
        <dbReference type="ChEBI" id="CHEBI:15378"/>
        <dbReference type="ChEBI" id="CHEBI:30616"/>
        <dbReference type="ChEBI" id="CHEBI:43474"/>
        <dbReference type="ChEBI" id="CHEBI:57932"/>
        <dbReference type="ChEBI" id="CHEBI:456216"/>
        <dbReference type="EC" id="7.4.2.11"/>
    </reaction>
</comment>
<comment type="subunit">
    <text evidence="1">The complex is composed of two ATP-binding proteins (MetN), two transmembrane proteins (MetI) and a solute-binding protein (MetQ).</text>
</comment>
<comment type="subcellular location">
    <subcellularLocation>
        <location evidence="1">Cell inner membrane</location>
        <topology evidence="1">Peripheral membrane protein</topology>
    </subcellularLocation>
</comment>
<comment type="similarity">
    <text evidence="1">Belongs to the ABC transporter superfamily. Methionine importer (TC 3.A.1.24) family.</text>
</comment>
<dbReference type="EC" id="7.4.2.11" evidence="1"/>
<dbReference type="EMBL" id="BX640434">
    <property type="protein sequence ID" value="CAE39008.1"/>
    <property type="molecule type" value="Genomic_DNA"/>
</dbReference>
<dbReference type="RefSeq" id="WP_003814544.1">
    <property type="nucleotide sequence ID" value="NC_002928.3"/>
</dbReference>
<dbReference type="SMR" id="Q7W4E1"/>
<dbReference type="KEGG" id="bpa:BPP3725"/>
<dbReference type="HOGENOM" id="CLU_000604_1_3_4"/>
<dbReference type="Proteomes" id="UP000001421">
    <property type="component" value="Chromosome"/>
</dbReference>
<dbReference type="GO" id="GO:0005886">
    <property type="term" value="C:plasma membrane"/>
    <property type="evidence" value="ECO:0007669"/>
    <property type="project" value="UniProtKB-SubCell"/>
</dbReference>
<dbReference type="GO" id="GO:0033232">
    <property type="term" value="F:ABC-type D-methionine transporter activity"/>
    <property type="evidence" value="ECO:0007669"/>
    <property type="project" value="UniProtKB-EC"/>
</dbReference>
<dbReference type="GO" id="GO:0005524">
    <property type="term" value="F:ATP binding"/>
    <property type="evidence" value="ECO:0007669"/>
    <property type="project" value="UniProtKB-KW"/>
</dbReference>
<dbReference type="GO" id="GO:0016887">
    <property type="term" value="F:ATP hydrolysis activity"/>
    <property type="evidence" value="ECO:0007669"/>
    <property type="project" value="InterPro"/>
</dbReference>
<dbReference type="CDD" id="cd03258">
    <property type="entry name" value="ABC_MetN_methionine_transporter"/>
    <property type="match status" value="1"/>
</dbReference>
<dbReference type="FunFam" id="3.40.50.300:FF:000056">
    <property type="entry name" value="Cell division ATP-binding protein FtsE"/>
    <property type="match status" value="1"/>
</dbReference>
<dbReference type="Gene3D" id="3.30.70.260">
    <property type="match status" value="1"/>
</dbReference>
<dbReference type="Gene3D" id="3.40.50.300">
    <property type="entry name" value="P-loop containing nucleotide triphosphate hydrolases"/>
    <property type="match status" value="1"/>
</dbReference>
<dbReference type="InterPro" id="IPR003593">
    <property type="entry name" value="AAA+_ATPase"/>
</dbReference>
<dbReference type="InterPro" id="IPR003439">
    <property type="entry name" value="ABC_transporter-like_ATP-bd"/>
</dbReference>
<dbReference type="InterPro" id="IPR017871">
    <property type="entry name" value="ABC_transporter-like_CS"/>
</dbReference>
<dbReference type="InterPro" id="IPR045865">
    <property type="entry name" value="ACT-like_dom_sf"/>
</dbReference>
<dbReference type="InterPro" id="IPR041701">
    <property type="entry name" value="MetN_ABC"/>
</dbReference>
<dbReference type="InterPro" id="IPR050086">
    <property type="entry name" value="MetN_ABC_transporter-like"/>
</dbReference>
<dbReference type="InterPro" id="IPR018449">
    <property type="entry name" value="NIL_domain"/>
</dbReference>
<dbReference type="InterPro" id="IPR027417">
    <property type="entry name" value="P-loop_NTPase"/>
</dbReference>
<dbReference type="PANTHER" id="PTHR43166">
    <property type="entry name" value="AMINO ACID IMPORT ATP-BINDING PROTEIN"/>
    <property type="match status" value="1"/>
</dbReference>
<dbReference type="PANTHER" id="PTHR43166:SF30">
    <property type="entry name" value="METHIONINE IMPORT ATP-BINDING PROTEIN METN"/>
    <property type="match status" value="1"/>
</dbReference>
<dbReference type="Pfam" id="PF00005">
    <property type="entry name" value="ABC_tran"/>
    <property type="match status" value="1"/>
</dbReference>
<dbReference type="Pfam" id="PF09383">
    <property type="entry name" value="NIL"/>
    <property type="match status" value="1"/>
</dbReference>
<dbReference type="SMART" id="SM00382">
    <property type="entry name" value="AAA"/>
    <property type="match status" value="1"/>
</dbReference>
<dbReference type="SMART" id="SM00930">
    <property type="entry name" value="NIL"/>
    <property type="match status" value="1"/>
</dbReference>
<dbReference type="SUPFAM" id="SSF55021">
    <property type="entry name" value="ACT-like"/>
    <property type="match status" value="1"/>
</dbReference>
<dbReference type="SUPFAM" id="SSF52540">
    <property type="entry name" value="P-loop containing nucleoside triphosphate hydrolases"/>
    <property type="match status" value="1"/>
</dbReference>
<dbReference type="PROSITE" id="PS00211">
    <property type="entry name" value="ABC_TRANSPORTER_1"/>
    <property type="match status" value="1"/>
</dbReference>
<dbReference type="PROSITE" id="PS50893">
    <property type="entry name" value="ABC_TRANSPORTER_2"/>
    <property type="match status" value="1"/>
</dbReference>
<dbReference type="PROSITE" id="PS51264">
    <property type="entry name" value="METN"/>
    <property type="match status" value="1"/>
</dbReference>
<sequence>MIHIENLSKTYATPHGRFEALRGINLHIQQGEVFGIIGPSGAGKSTLVQCINLLERPDQGSIAIGGQALVGLGEAQLRNQRRRIGMVFQGFNLLARRTVYGNVALPLEIAGVARAEIPARVERLLALVGLEHLRDRYPSQISGGQKQRVGIARALANDPDVLLSDEATSALDPETTHNILALLRDINRKTGVTVVMITHQMEVVREICDRVAVLSHGEVVELGSTREVFAAPRHEVTRAMVSAATASDLSEATLAAVKQRIDALAAAEPGRAVRLWRLSLKGVAAGEPLWSDLAREFALDVSLVQARVEDIQGVAVGTLFVLAQGAPHAVKDALAALAAREITVEEIAHEPATDRSAYHVAA</sequence>
<evidence type="ECO:0000255" key="1">
    <source>
        <dbReference type="HAMAP-Rule" id="MF_01719"/>
    </source>
</evidence>
<keyword id="KW-0029">Amino-acid transport</keyword>
<keyword id="KW-0067">ATP-binding</keyword>
<keyword id="KW-0997">Cell inner membrane</keyword>
<keyword id="KW-1003">Cell membrane</keyword>
<keyword id="KW-0472">Membrane</keyword>
<keyword id="KW-0547">Nucleotide-binding</keyword>
<keyword id="KW-1278">Translocase</keyword>
<keyword id="KW-0813">Transport</keyword>
<proteinExistence type="inferred from homology"/>
<protein>
    <recommendedName>
        <fullName evidence="1">Methionine import ATP-binding protein MetN</fullName>
        <ecNumber evidence="1">7.4.2.11</ecNumber>
    </recommendedName>
</protein>
<name>METN_BORPA</name>
<gene>
    <name evidence="1" type="primary">metN</name>
    <name type="ordered locus">BPP3725</name>
</gene>
<organism>
    <name type="scientific">Bordetella parapertussis (strain 12822 / ATCC BAA-587 / NCTC 13253)</name>
    <dbReference type="NCBI Taxonomy" id="257311"/>
    <lineage>
        <taxon>Bacteria</taxon>
        <taxon>Pseudomonadati</taxon>
        <taxon>Pseudomonadota</taxon>
        <taxon>Betaproteobacteria</taxon>
        <taxon>Burkholderiales</taxon>
        <taxon>Alcaligenaceae</taxon>
        <taxon>Bordetella</taxon>
    </lineage>
</organism>